<comment type="function">
    <text evidence="1">Catalyzes the cleavage of 5-oxoproline to form L-glutamate coupled to the hydrolysis of ATP to ADP and inorganic phosphate.</text>
</comment>
<comment type="catalytic activity">
    <reaction evidence="1">
        <text>5-oxo-L-proline + ATP + 2 H2O = L-glutamate + ADP + phosphate + H(+)</text>
        <dbReference type="Rhea" id="RHEA:10348"/>
        <dbReference type="ChEBI" id="CHEBI:15377"/>
        <dbReference type="ChEBI" id="CHEBI:15378"/>
        <dbReference type="ChEBI" id="CHEBI:29985"/>
        <dbReference type="ChEBI" id="CHEBI:30616"/>
        <dbReference type="ChEBI" id="CHEBI:43474"/>
        <dbReference type="ChEBI" id="CHEBI:58402"/>
        <dbReference type="ChEBI" id="CHEBI:456216"/>
        <dbReference type="EC" id="3.5.2.9"/>
    </reaction>
</comment>
<comment type="subunit">
    <text evidence="1">Forms a complex composed of PxpA, PxpB and PxpC.</text>
</comment>
<comment type="similarity">
    <text evidence="1">Belongs to the LamB/PxpA family.</text>
</comment>
<organism>
    <name type="scientific">Shigella boydii serotype 4 (strain Sb227)</name>
    <dbReference type="NCBI Taxonomy" id="300268"/>
    <lineage>
        <taxon>Bacteria</taxon>
        <taxon>Pseudomonadati</taxon>
        <taxon>Pseudomonadota</taxon>
        <taxon>Gammaproteobacteria</taxon>
        <taxon>Enterobacterales</taxon>
        <taxon>Enterobacteriaceae</taxon>
        <taxon>Shigella</taxon>
    </lineage>
</organism>
<sequence length="244" mass="25916">MKIDLNADLGEGCASDAELLTLVSSANIACGFHAGDAQTMQACVREAIKNGVAIGAHPSFPDRENFGRSAMQLPPETVYAQTLYQIGALATIARAQGGVMRHVKPHGMLYNQAAKEAQLADAIARAVYACDPALVLVGLAGSELIRAGKQYGLTTREEVFADRGYQADGSLVPRSQPGALIENEEQALAQTLEMVQHGRVKSITGEWATVTAQTVCLHGDGEHALAFARRLRSTFAEKEIVVAA</sequence>
<evidence type="ECO:0000255" key="1">
    <source>
        <dbReference type="HAMAP-Rule" id="MF_00691"/>
    </source>
</evidence>
<keyword id="KW-0067">ATP-binding</keyword>
<keyword id="KW-0378">Hydrolase</keyword>
<keyword id="KW-0547">Nucleotide-binding</keyword>
<gene>
    <name evidence="1" type="primary">pxpA</name>
    <name type="ordered locus">SBO_0572</name>
</gene>
<protein>
    <recommendedName>
        <fullName evidence="1">5-oxoprolinase subunit A</fullName>
        <shortName evidence="1">5-OPase subunit A</shortName>
        <ecNumber evidence="1">3.5.2.9</ecNumber>
    </recommendedName>
    <alternativeName>
        <fullName evidence="1">5-oxoprolinase (ATP-hydrolyzing) subunit A</fullName>
    </alternativeName>
</protein>
<name>PXPA_SHIBS</name>
<dbReference type="EC" id="3.5.2.9" evidence="1"/>
<dbReference type="EMBL" id="CP000036">
    <property type="protein sequence ID" value="ABB65261.1"/>
    <property type="molecule type" value="Genomic_DNA"/>
</dbReference>
<dbReference type="RefSeq" id="WP_000687142.1">
    <property type="nucleotide sequence ID" value="NC_007613.1"/>
</dbReference>
<dbReference type="SMR" id="Q324J7"/>
<dbReference type="GeneID" id="75205545"/>
<dbReference type="KEGG" id="sbo:SBO_0572"/>
<dbReference type="HOGENOM" id="CLU_069535_0_0_6"/>
<dbReference type="Proteomes" id="UP000007067">
    <property type="component" value="Chromosome"/>
</dbReference>
<dbReference type="GO" id="GO:0017168">
    <property type="term" value="F:5-oxoprolinase (ATP-hydrolyzing) activity"/>
    <property type="evidence" value="ECO:0007669"/>
    <property type="project" value="UniProtKB-UniRule"/>
</dbReference>
<dbReference type="GO" id="GO:0005524">
    <property type="term" value="F:ATP binding"/>
    <property type="evidence" value="ECO:0007669"/>
    <property type="project" value="UniProtKB-UniRule"/>
</dbReference>
<dbReference type="GO" id="GO:0005975">
    <property type="term" value="P:carbohydrate metabolic process"/>
    <property type="evidence" value="ECO:0007669"/>
    <property type="project" value="InterPro"/>
</dbReference>
<dbReference type="CDD" id="cd10800">
    <property type="entry name" value="LamB_YcsF_YbgL_like"/>
    <property type="match status" value="1"/>
</dbReference>
<dbReference type="Gene3D" id="3.20.20.370">
    <property type="entry name" value="Glycoside hydrolase/deacetylase"/>
    <property type="match status" value="1"/>
</dbReference>
<dbReference type="HAMAP" id="MF_00691">
    <property type="entry name" value="PxpA"/>
    <property type="match status" value="1"/>
</dbReference>
<dbReference type="InterPro" id="IPR011330">
    <property type="entry name" value="Glyco_hydro/deAcase_b/a-brl"/>
</dbReference>
<dbReference type="InterPro" id="IPR005501">
    <property type="entry name" value="LamB/YcsF/PxpA-like"/>
</dbReference>
<dbReference type="NCBIfam" id="NF003812">
    <property type="entry name" value="PRK05406.1-1"/>
    <property type="match status" value="1"/>
</dbReference>
<dbReference type="NCBIfam" id="NF003814">
    <property type="entry name" value="PRK05406.1-3"/>
    <property type="match status" value="1"/>
</dbReference>
<dbReference type="NCBIfam" id="NF003815">
    <property type="entry name" value="PRK05406.1-4"/>
    <property type="match status" value="1"/>
</dbReference>
<dbReference type="NCBIfam" id="NF003816">
    <property type="entry name" value="PRK05406.1-5"/>
    <property type="match status" value="1"/>
</dbReference>
<dbReference type="PANTHER" id="PTHR30292:SF0">
    <property type="entry name" value="5-OXOPROLINASE SUBUNIT A"/>
    <property type="match status" value="1"/>
</dbReference>
<dbReference type="PANTHER" id="PTHR30292">
    <property type="entry name" value="UNCHARACTERIZED PROTEIN YBGL-RELATED"/>
    <property type="match status" value="1"/>
</dbReference>
<dbReference type="Pfam" id="PF03746">
    <property type="entry name" value="LamB_YcsF"/>
    <property type="match status" value="1"/>
</dbReference>
<dbReference type="SUPFAM" id="SSF88713">
    <property type="entry name" value="Glycoside hydrolase/deacetylase"/>
    <property type="match status" value="1"/>
</dbReference>
<proteinExistence type="inferred from homology"/>
<accession>Q324J7</accession>
<feature type="chain" id="PRO_1000045221" description="5-oxoprolinase subunit A">
    <location>
        <begin position="1"/>
        <end position="244"/>
    </location>
</feature>
<reference key="1">
    <citation type="journal article" date="2005" name="Nucleic Acids Res.">
        <title>Genome dynamics and diversity of Shigella species, the etiologic agents of bacillary dysentery.</title>
        <authorList>
            <person name="Yang F."/>
            <person name="Yang J."/>
            <person name="Zhang X."/>
            <person name="Chen L."/>
            <person name="Jiang Y."/>
            <person name="Yan Y."/>
            <person name="Tang X."/>
            <person name="Wang J."/>
            <person name="Xiong Z."/>
            <person name="Dong J."/>
            <person name="Xue Y."/>
            <person name="Zhu Y."/>
            <person name="Xu X."/>
            <person name="Sun L."/>
            <person name="Chen S."/>
            <person name="Nie H."/>
            <person name="Peng J."/>
            <person name="Xu J."/>
            <person name="Wang Y."/>
            <person name="Yuan Z."/>
            <person name="Wen Y."/>
            <person name="Yao Z."/>
            <person name="Shen Y."/>
            <person name="Qiang B."/>
            <person name="Hou Y."/>
            <person name="Yu J."/>
            <person name="Jin Q."/>
        </authorList>
    </citation>
    <scope>NUCLEOTIDE SEQUENCE [LARGE SCALE GENOMIC DNA]</scope>
    <source>
        <strain>Sb227</strain>
    </source>
</reference>